<accession>A6VFL5</accession>
<keyword id="KW-0963">Cytoplasm</keyword>
<keyword id="KW-0489">Methyltransferase</keyword>
<keyword id="KW-0949">S-adenosyl-L-methionine</keyword>
<keyword id="KW-0808">Transferase</keyword>
<keyword id="KW-0819">tRNA processing</keyword>
<reference key="1">
    <citation type="submission" date="2007-06" db="EMBL/GenBank/DDBJ databases">
        <title>Complete sequence of Methanococcus maripaludis C7.</title>
        <authorList>
            <consortium name="US DOE Joint Genome Institute"/>
            <person name="Copeland A."/>
            <person name="Lucas S."/>
            <person name="Lapidus A."/>
            <person name="Barry K."/>
            <person name="Glavina del Rio T."/>
            <person name="Dalin E."/>
            <person name="Tice H."/>
            <person name="Pitluck S."/>
            <person name="Clum A."/>
            <person name="Schmutz J."/>
            <person name="Larimer F."/>
            <person name="Land M."/>
            <person name="Hauser L."/>
            <person name="Kyrpides N."/>
            <person name="Anderson I."/>
            <person name="Sieprawska-Lupa M."/>
            <person name="Whitman W.B."/>
            <person name="Richardson P."/>
        </authorList>
    </citation>
    <scope>NUCLEOTIDE SEQUENCE [LARGE SCALE GENOMIC DNA]</scope>
    <source>
        <strain>C7 / ATCC BAA-1331</strain>
    </source>
</reference>
<name>TRMY_METM7</name>
<proteinExistence type="inferred from homology"/>
<dbReference type="EC" id="2.1.1.257" evidence="1"/>
<dbReference type="EMBL" id="CP000745">
    <property type="protein sequence ID" value="ABR65241.1"/>
    <property type="molecule type" value="Genomic_DNA"/>
</dbReference>
<dbReference type="SMR" id="A6VFL5"/>
<dbReference type="STRING" id="426368.MmarC7_0171"/>
<dbReference type="KEGG" id="mmz:MmarC7_0171"/>
<dbReference type="eggNOG" id="arCOG01239">
    <property type="taxonomic scope" value="Archaea"/>
</dbReference>
<dbReference type="HOGENOM" id="CLU_107018_0_0_2"/>
<dbReference type="OrthoDB" id="27492at2157"/>
<dbReference type="GO" id="GO:0005737">
    <property type="term" value="C:cytoplasm"/>
    <property type="evidence" value="ECO:0007669"/>
    <property type="project" value="UniProtKB-SubCell"/>
</dbReference>
<dbReference type="GO" id="GO:0008757">
    <property type="term" value="F:S-adenosylmethionine-dependent methyltransferase activity"/>
    <property type="evidence" value="ECO:0007669"/>
    <property type="project" value="UniProtKB-UniRule"/>
</dbReference>
<dbReference type="GO" id="GO:0008175">
    <property type="term" value="F:tRNA methyltransferase activity"/>
    <property type="evidence" value="ECO:0007669"/>
    <property type="project" value="UniProtKB-UniRule"/>
</dbReference>
<dbReference type="GO" id="GO:0030488">
    <property type="term" value="P:tRNA methylation"/>
    <property type="evidence" value="ECO:0007669"/>
    <property type="project" value="UniProtKB-UniRule"/>
</dbReference>
<dbReference type="CDD" id="cd18087">
    <property type="entry name" value="TrmY-like"/>
    <property type="match status" value="1"/>
</dbReference>
<dbReference type="Gene3D" id="3.40.1280.10">
    <property type="match status" value="1"/>
</dbReference>
<dbReference type="HAMAP" id="MF_00587">
    <property type="entry name" value="tRNA_methyltr_TrmY"/>
    <property type="match status" value="1"/>
</dbReference>
<dbReference type="InterPro" id="IPR029028">
    <property type="entry name" value="Alpha/beta_knot_MTases"/>
</dbReference>
<dbReference type="InterPro" id="IPR007158">
    <property type="entry name" value="TrmY"/>
</dbReference>
<dbReference type="InterPro" id="IPR029026">
    <property type="entry name" value="tRNA_m1G_MTases_N"/>
</dbReference>
<dbReference type="NCBIfam" id="NF002560">
    <property type="entry name" value="PRK02135.1"/>
    <property type="match status" value="1"/>
</dbReference>
<dbReference type="PANTHER" id="PTHR40703">
    <property type="entry name" value="TRNA (PSEUDOURIDINE(54)-N(1))-METHYLTRANSFERASE"/>
    <property type="match status" value="1"/>
</dbReference>
<dbReference type="PANTHER" id="PTHR40703:SF1">
    <property type="entry name" value="TRNA (PSEUDOURIDINE(54)-N(1))-METHYLTRANSFERASE"/>
    <property type="match status" value="1"/>
</dbReference>
<dbReference type="Pfam" id="PF04013">
    <property type="entry name" value="Methyltrn_RNA_2"/>
    <property type="match status" value="1"/>
</dbReference>
<dbReference type="SUPFAM" id="SSF75217">
    <property type="entry name" value="alpha/beta knot"/>
    <property type="match status" value="1"/>
</dbReference>
<evidence type="ECO:0000255" key="1">
    <source>
        <dbReference type="HAMAP-Rule" id="MF_00587"/>
    </source>
</evidence>
<comment type="function">
    <text evidence="1">Specifically catalyzes the N1-methylation of pseudouridine at position 54 (Psi54) in tRNAs.</text>
</comment>
<comment type="catalytic activity">
    <reaction evidence="1">
        <text>pseudouridine(54) in tRNA + S-adenosyl-L-methionine = N(1)-methylpseudouridine(54) in tRNA + S-adenosyl-L-homocysteine + H(+)</text>
        <dbReference type="Rhea" id="RHEA:55292"/>
        <dbReference type="Rhea" id="RHEA-COMP:14140"/>
        <dbReference type="Rhea" id="RHEA-COMP:14141"/>
        <dbReference type="ChEBI" id="CHEBI:15378"/>
        <dbReference type="ChEBI" id="CHEBI:57856"/>
        <dbReference type="ChEBI" id="CHEBI:59789"/>
        <dbReference type="ChEBI" id="CHEBI:65314"/>
        <dbReference type="ChEBI" id="CHEBI:74890"/>
        <dbReference type="EC" id="2.1.1.257"/>
    </reaction>
</comment>
<comment type="subunit">
    <text evidence="1">Homodimer.</text>
</comment>
<comment type="subcellular location">
    <subcellularLocation>
        <location evidence="1">Cytoplasm</location>
    </subcellularLocation>
</comment>
<comment type="similarity">
    <text evidence="1">Belongs to the methyltransferase superfamily. TrmY family.</text>
</comment>
<feature type="chain" id="PRO_1000025469" description="tRNA (pseudouridine(54)-N(1))-methyltransferase">
    <location>
        <begin position="1"/>
        <end position="198"/>
    </location>
</feature>
<feature type="binding site" evidence="1">
    <location>
        <position position="130"/>
    </location>
    <ligand>
        <name>S-adenosyl-L-methionine</name>
        <dbReference type="ChEBI" id="CHEBI:59789"/>
    </ligand>
</feature>
<feature type="binding site" evidence="1">
    <location>
        <position position="153"/>
    </location>
    <ligand>
        <name>S-adenosyl-L-methionine</name>
        <dbReference type="ChEBI" id="CHEBI:59789"/>
    </ligand>
</feature>
<feature type="binding site" evidence="1">
    <location>
        <begin position="176"/>
        <end position="181"/>
    </location>
    <ligand>
        <name>S-adenosyl-L-methionine</name>
        <dbReference type="ChEBI" id="CHEBI:59789"/>
    </ligand>
</feature>
<feature type="binding site" evidence="1">
    <location>
        <position position="186"/>
    </location>
    <ligand>
        <name>S-adenosyl-L-methionine</name>
        <dbReference type="ChEBI" id="CHEBI:59789"/>
    </ligand>
</feature>
<sequence>MKEFIIKANKAVTNGEINLKDLPGSSGRLDLLCRCVNSAFFLSHDMRRDTIFYSVNYGDPNPPVTLKFVGSELKRVSPDERSIALFIKKALEKDATELWKESTSGIYSSKREFRDIILEKKNEGKRIFYLHLNGKPLEDFEFKDDEDFLFVLGDHIGIGDEDEEFLEEIGAEKISLSPLELHADHCIILVHNILDRLK</sequence>
<protein>
    <recommendedName>
        <fullName evidence="1">tRNA (pseudouridine(54)-N(1))-methyltransferase</fullName>
        <ecNumber evidence="1">2.1.1.257</ecNumber>
    </recommendedName>
</protein>
<gene>
    <name evidence="1" type="primary">trmY</name>
    <name type="ordered locus">MmarC7_0171</name>
</gene>
<organism>
    <name type="scientific">Methanococcus maripaludis (strain C7 / ATCC BAA-1331)</name>
    <dbReference type="NCBI Taxonomy" id="426368"/>
    <lineage>
        <taxon>Archaea</taxon>
        <taxon>Methanobacteriati</taxon>
        <taxon>Methanobacteriota</taxon>
        <taxon>Methanomada group</taxon>
        <taxon>Methanococci</taxon>
        <taxon>Methanococcales</taxon>
        <taxon>Methanococcaceae</taxon>
        <taxon>Methanococcus</taxon>
    </lineage>
</organism>